<reference key="1">
    <citation type="journal article" date="1999" name="Nature">
        <title>The DNA sequence of human chromosome 22.</title>
        <authorList>
            <person name="Dunham I."/>
            <person name="Hunt A.R."/>
            <person name="Collins J.E."/>
            <person name="Bruskiewich R."/>
            <person name="Beare D.M."/>
            <person name="Clamp M."/>
            <person name="Smink L.J."/>
            <person name="Ainscough R."/>
            <person name="Almeida J.P."/>
            <person name="Babbage A.K."/>
            <person name="Bagguley C."/>
            <person name="Bailey J."/>
            <person name="Barlow K.F."/>
            <person name="Bates K.N."/>
            <person name="Beasley O.P."/>
            <person name="Bird C.P."/>
            <person name="Blakey S.E."/>
            <person name="Bridgeman A.M."/>
            <person name="Buck D."/>
            <person name="Burgess J."/>
            <person name="Burrill W.D."/>
            <person name="Burton J."/>
            <person name="Carder C."/>
            <person name="Carter N.P."/>
            <person name="Chen Y."/>
            <person name="Clark G."/>
            <person name="Clegg S.M."/>
            <person name="Cobley V.E."/>
            <person name="Cole C.G."/>
            <person name="Collier R.E."/>
            <person name="Connor R."/>
            <person name="Conroy D."/>
            <person name="Corby N.R."/>
            <person name="Coville G.J."/>
            <person name="Cox A.V."/>
            <person name="Davis J."/>
            <person name="Dawson E."/>
            <person name="Dhami P.D."/>
            <person name="Dockree C."/>
            <person name="Dodsworth S.J."/>
            <person name="Durbin R.M."/>
            <person name="Ellington A.G."/>
            <person name="Evans K.L."/>
            <person name="Fey J.M."/>
            <person name="Fleming K."/>
            <person name="French L."/>
            <person name="Garner A.A."/>
            <person name="Gilbert J.G.R."/>
            <person name="Goward M.E."/>
            <person name="Grafham D.V."/>
            <person name="Griffiths M.N.D."/>
            <person name="Hall C."/>
            <person name="Hall R.E."/>
            <person name="Hall-Tamlyn G."/>
            <person name="Heathcott R.W."/>
            <person name="Ho S."/>
            <person name="Holmes S."/>
            <person name="Hunt S.E."/>
            <person name="Jones M.C."/>
            <person name="Kershaw J."/>
            <person name="Kimberley A.M."/>
            <person name="King A."/>
            <person name="Laird G.K."/>
            <person name="Langford C.F."/>
            <person name="Leversha M.A."/>
            <person name="Lloyd C."/>
            <person name="Lloyd D.M."/>
            <person name="Martyn I.D."/>
            <person name="Mashreghi-Mohammadi M."/>
            <person name="Matthews L.H."/>
            <person name="Mccann O.T."/>
            <person name="Mcclay J."/>
            <person name="Mclaren S."/>
            <person name="McMurray A.A."/>
            <person name="Milne S.A."/>
            <person name="Mortimore B.J."/>
            <person name="Odell C.N."/>
            <person name="Pavitt R."/>
            <person name="Pearce A.V."/>
            <person name="Pearson D."/>
            <person name="Phillimore B.J.C.T."/>
            <person name="Phillips S.H."/>
            <person name="Plumb R.W."/>
            <person name="Ramsay H."/>
            <person name="Ramsey Y."/>
            <person name="Rogers L."/>
            <person name="Ross M.T."/>
            <person name="Scott C.E."/>
            <person name="Sehra H.K."/>
            <person name="Skuce C.D."/>
            <person name="Smalley S."/>
            <person name="Smith M.L."/>
            <person name="Soderlund C."/>
            <person name="Spragon L."/>
            <person name="Steward C.A."/>
            <person name="Sulston J.E."/>
            <person name="Swann R.M."/>
            <person name="Vaudin M."/>
            <person name="Wall M."/>
            <person name="Wallis J.M."/>
            <person name="Whiteley M.N."/>
            <person name="Willey D.L."/>
            <person name="Williams L."/>
            <person name="Williams S.A."/>
            <person name="Williamson H."/>
            <person name="Wilmer T.E."/>
            <person name="Wilming L."/>
            <person name="Wright C.L."/>
            <person name="Hubbard T."/>
            <person name="Bentley D.R."/>
            <person name="Beck S."/>
            <person name="Rogers J."/>
            <person name="Shimizu N."/>
            <person name="Minoshima S."/>
            <person name="Kawasaki K."/>
            <person name="Sasaki T."/>
            <person name="Asakawa S."/>
            <person name="Kudoh J."/>
            <person name="Shintani A."/>
            <person name="Shibuya K."/>
            <person name="Yoshizaki Y."/>
            <person name="Aoki N."/>
            <person name="Mitsuyama S."/>
            <person name="Roe B.A."/>
            <person name="Chen F."/>
            <person name="Chu L."/>
            <person name="Crabtree J."/>
            <person name="Deschamps S."/>
            <person name="Do A."/>
            <person name="Do T."/>
            <person name="Dorman A."/>
            <person name="Fang F."/>
            <person name="Fu Y."/>
            <person name="Hu P."/>
            <person name="Hua A."/>
            <person name="Kenton S."/>
            <person name="Lai H."/>
            <person name="Lao H.I."/>
            <person name="Lewis J."/>
            <person name="Lewis S."/>
            <person name="Lin S.-P."/>
            <person name="Loh P."/>
            <person name="Malaj E."/>
            <person name="Nguyen T."/>
            <person name="Pan H."/>
            <person name="Phan S."/>
            <person name="Qi S."/>
            <person name="Qian Y."/>
            <person name="Ray L."/>
            <person name="Ren Q."/>
            <person name="Shaull S."/>
            <person name="Sloan D."/>
            <person name="Song L."/>
            <person name="Wang Q."/>
            <person name="Wang Y."/>
            <person name="Wang Z."/>
            <person name="White J."/>
            <person name="Willingham D."/>
            <person name="Wu H."/>
            <person name="Yao Z."/>
            <person name="Zhan M."/>
            <person name="Zhang G."/>
            <person name="Chissoe S."/>
            <person name="Murray J."/>
            <person name="Miller N."/>
            <person name="Minx P."/>
            <person name="Fulton R."/>
            <person name="Johnson D."/>
            <person name="Bemis G."/>
            <person name="Bentley D."/>
            <person name="Bradshaw H."/>
            <person name="Bourne S."/>
            <person name="Cordes M."/>
            <person name="Du Z."/>
            <person name="Fulton L."/>
            <person name="Goela D."/>
            <person name="Graves T."/>
            <person name="Hawkins J."/>
            <person name="Hinds K."/>
            <person name="Kemp K."/>
            <person name="Latreille P."/>
            <person name="Layman D."/>
            <person name="Ozersky P."/>
            <person name="Rohlfing T."/>
            <person name="Scheet P."/>
            <person name="Walker C."/>
            <person name="Wamsley A."/>
            <person name="Wohldmann P."/>
            <person name="Pepin K."/>
            <person name="Nelson J."/>
            <person name="Korf I."/>
            <person name="Bedell J.A."/>
            <person name="Hillier L.W."/>
            <person name="Mardis E."/>
            <person name="Waterston R."/>
            <person name="Wilson R."/>
            <person name="Emanuel B.S."/>
            <person name="Shaikh T."/>
            <person name="Kurahashi H."/>
            <person name="Saitta S."/>
            <person name="Budarf M.L."/>
            <person name="McDermid H.E."/>
            <person name="Johnson A."/>
            <person name="Wong A.C.C."/>
            <person name="Morrow B.E."/>
            <person name="Edelmann L."/>
            <person name="Kim U.J."/>
            <person name="Shizuya H."/>
            <person name="Simon M.I."/>
            <person name="Dumanski J.P."/>
            <person name="Peyrard M."/>
            <person name="Kedra D."/>
            <person name="Seroussi E."/>
            <person name="Fransson I."/>
            <person name="Tapia I."/>
            <person name="Bruder C.E."/>
            <person name="O'Brien K.P."/>
            <person name="Wilkinson P."/>
            <person name="Bodenteich A."/>
            <person name="Hartman K."/>
            <person name="Hu X."/>
            <person name="Khan A.S."/>
            <person name="Lane L."/>
            <person name="Tilahun Y."/>
            <person name="Wright H."/>
        </authorList>
    </citation>
    <scope>NUCLEOTIDE SEQUENCE [LARGE SCALE GENOMIC DNA]</scope>
</reference>
<name>CC188_HUMAN</name>
<sequence length="402" mass="43548">MEGLKTLGPCGHPHPQCPPTPASSSHGGGLDQPCQGFVGWPCLGPISSAHSVQSQRPFPVPGAGGSGPTVEGEAPGLFLSSQEQRARDTEGPRQGDLEAGLGWGWPLHPGSNQGAPRQGGSIGSGTRPCPCPPLSREGGALASPRVALSQLQCGLLGSAEQSFLQLEQENHSLKRQNQELREQLGALLGPGQQFLPLCPEHSSCTALAWPPDPAGTQPLGNRAPLQLLRRELCQGQEAFVQQSQNELQQIRLCFERKKMVITEVWDNVAEMHMALNNQATGLLNLKKDIRGVLDQMEDIQLEILRERAQCRTRARKEKQMASMSKGRPKLGSSKGLAGQLWLLTLRLLLGALLVWTAAYVYVVNPTPFEGLVPPLLSRATVWKLRALLDPFLRLKVDGFLPF</sequence>
<dbReference type="EMBL" id="AC006547">
    <property type="status" value="NOT_ANNOTATED_CDS"/>
    <property type="molecule type" value="Genomic_DNA"/>
</dbReference>
<dbReference type="CCDS" id="CCDS93123.1"/>
<dbReference type="RefSeq" id="NP_001352821.1">
    <property type="nucleotide sequence ID" value="NM_001365892.2"/>
</dbReference>
<dbReference type="RefSeq" id="XP_005261297.1">
    <property type="nucleotide sequence ID" value="XM_005261240.3"/>
</dbReference>
<dbReference type="SMR" id="H7C350"/>
<dbReference type="STRING" id="9606.ENSP00000409542"/>
<dbReference type="GlyGen" id="H7C350">
    <property type="glycosylation" value="2 sites"/>
</dbReference>
<dbReference type="iPTMnet" id="H7C350"/>
<dbReference type="PhosphoSitePlus" id="H7C350"/>
<dbReference type="BioMuta" id="CCDC188"/>
<dbReference type="MassIVE" id="H7C350"/>
<dbReference type="PaxDb" id="9606-ENSP00000409542"/>
<dbReference type="PeptideAtlas" id="H7C350"/>
<dbReference type="Antibodypedia" id="77519">
    <property type="antibodies" value="4 antibodies from 4 providers"/>
</dbReference>
<dbReference type="Ensembl" id="ENST00000439765.4">
    <property type="protein sequence ID" value="ENSP00000409542.2"/>
    <property type="gene ID" value="ENSG00000234409.7"/>
</dbReference>
<dbReference type="GeneID" id="388849"/>
<dbReference type="MANE-Select" id="ENST00000439765.4">
    <property type="protein sequence ID" value="ENSP00000409542.2"/>
    <property type="RefSeq nucleotide sequence ID" value="NM_001365892.2"/>
    <property type="RefSeq protein sequence ID" value="NP_001352821.1"/>
</dbReference>
<dbReference type="UCSC" id="uc062bro.1">
    <property type="organism name" value="human"/>
</dbReference>
<dbReference type="AGR" id="HGNC:51899"/>
<dbReference type="GeneCards" id="CCDC188"/>
<dbReference type="HGNC" id="HGNC:51899">
    <property type="gene designation" value="CCDC188"/>
</dbReference>
<dbReference type="HPA" id="ENSG00000234409">
    <property type="expression patterns" value="Tissue enriched (testis)"/>
</dbReference>
<dbReference type="neXtProt" id="NX_H7C350"/>
<dbReference type="OpenTargets" id="ENSG00000234409"/>
<dbReference type="VEuPathDB" id="HostDB:ENSG00000234409"/>
<dbReference type="eggNOG" id="ENOG502TF5Y">
    <property type="taxonomic scope" value="Eukaryota"/>
</dbReference>
<dbReference type="GeneTree" id="ENSGT00940000153380"/>
<dbReference type="HOGENOM" id="CLU_036049_0_0_1"/>
<dbReference type="InParanoid" id="H7C350"/>
<dbReference type="OMA" id="AGWPCLG"/>
<dbReference type="OrthoDB" id="9801703at2759"/>
<dbReference type="PAN-GO" id="H7C350">
    <property type="GO annotations" value="0 GO annotations based on evolutionary models"/>
</dbReference>
<dbReference type="BioGRID-ORCS" id="388849">
    <property type="hits" value="10 hits in 202 CRISPR screens"/>
</dbReference>
<dbReference type="GenomeRNAi" id="388849"/>
<dbReference type="Pharos" id="H7C350">
    <property type="development level" value="Tdark"/>
</dbReference>
<dbReference type="PRO" id="PR:H7C350"/>
<dbReference type="Proteomes" id="UP000005640">
    <property type="component" value="Chromosome 22"/>
</dbReference>
<dbReference type="RNAct" id="H7C350">
    <property type="molecule type" value="protein"/>
</dbReference>
<dbReference type="Bgee" id="ENSG00000234409">
    <property type="expression patterns" value="Expressed in left testis and 92 other cell types or tissues"/>
</dbReference>
<dbReference type="GO" id="GO:0016020">
    <property type="term" value="C:membrane"/>
    <property type="evidence" value="ECO:0007669"/>
    <property type="project" value="UniProtKB-SubCell"/>
</dbReference>
<dbReference type="InterPro" id="IPR026617">
    <property type="entry name" value="SMCO2/5"/>
</dbReference>
<dbReference type="PANTHER" id="PTHR22422:SF6">
    <property type="entry name" value="COILED-COIL DOMAIN-CONTAINING PROTEIN 188"/>
    <property type="match status" value="1"/>
</dbReference>
<dbReference type="PANTHER" id="PTHR22422">
    <property type="entry name" value="TRANSMEMBRANE AND COILED-COIL DOMAIN-CONTAINING PROTEIN 5B-RELATED"/>
    <property type="match status" value="1"/>
</dbReference>
<evidence type="ECO:0000255" key="1"/>
<evidence type="ECO:0000256" key="2">
    <source>
        <dbReference type="SAM" id="MobiDB-lite"/>
    </source>
</evidence>
<evidence type="ECO:0000305" key="3"/>
<evidence type="ECO:0000312" key="4">
    <source>
        <dbReference type="HGNC" id="HGNC:51899"/>
    </source>
</evidence>
<comment type="subcellular location">
    <subcellularLocation>
        <location evidence="1">Membrane</location>
        <topology evidence="1">Single-pass membrane protein</topology>
    </subcellularLocation>
</comment>
<keyword id="KW-0175">Coiled coil</keyword>
<keyword id="KW-0472">Membrane</keyword>
<keyword id="KW-1267">Proteomics identification</keyword>
<keyword id="KW-1185">Reference proteome</keyword>
<keyword id="KW-0812">Transmembrane</keyword>
<keyword id="KW-1133">Transmembrane helix</keyword>
<gene>
    <name evidence="4" type="primary">CCDC188</name>
</gene>
<protein>
    <recommendedName>
        <fullName evidence="3">Coiled-coil domain-containing protein 188</fullName>
    </recommendedName>
</protein>
<feature type="chain" id="PRO_0000435398" description="Coiled-coil domain-containing protein 188">
    <location>
        <begin position="1"/>
        <end position="402"/>
    </location>
</feature>
<feature type="transmembrane region" description="Helical" evidence="1">
    <location>
        <begin position="347"/>
        <end position="363"/>
    </location>
</feature>
<feature type="region of interest" description="Disordered" evidence="2">
    <location>
        <begin position="1"/>
        <end position="30"/>
    </location>
</feature>
<feature type="region of interest" description="Disordered" evidence="2">
    <location>
        <begin position="50"/>
        <end position="74"/>
    </location>
</feature>
<feature type="region of interest" description="Disordered" evidence="2">
    <location>
        <begin position="108"/>
        <end position="131"/>
    </location>
</feature>
<feature type="coiled-coil region" evidence="1">
    <location>
        <begin position="154"/>
        <end position="189"/>
    </location>
</feature>
<accession>H7C350</accession>
<organism>
    <name type="scientific">Homo sapiens</name>
    <name type="common">Human</name>
    <dbReference type="NCBI Taxonomy" id="9606"/>
    <lineage>
        <taxon>Eukaryota</taxon>
        <taxon>Metazoa</taxon>
        <taxon>Chordata</taxon>
        <taxon>Craniata</taxon>
        <taxon>Vertebrata</taxon>
        <taxon>Euteleostomi</taxon>
        <taxon>Mammalia</taxon>
        <taxon>Eutheria</taxon>
        <taxon>Euarchontoglires</taxon>
        <taxon>Primates</taxon>
        <taxon>Haplorrhini</taxon>
        <taxon>Catarrhini</taxon>
        <taxon>Hominidae</taxon>
        <taxon>Homo</taxon>
    </lineage>
</organism>
<proteinExistence type="evidence at protein level"/>